<evidence type="ECO:0000250" key="1">
    <source>
        <dbReference type="UniProtKB" id="P00390"/>
    </source>
</evidence>
<evidence type="ECO:0000250" key="2">
    <source>
        <dbReference type="UniProtKB" id="P06715"/>
    </source>
</evidence>
<evidence type="ECO:0000305" key="3"/>
<evidence type="ECO:0000312" key="4">
    <source>
        <dbReference type="EMBL" id="BAF10399.1"/>
    </source>
</evidence>
<evidence type="ECO:0000312" key="5">
    <source>
        <dbReference type="EMBL" id="EAZ25050.1"/>
    </source>
</evidence>
<reference key="1">
    <citation type="journal article" date="1998" name="Plant Cell Physiol.">
        <title>Gene cloning and expression of cytosolic glutathione reductase in rice (Oryza sativa L.).</title>
        <authorList>
            <person name="Kaminaka H."/>
            <person name="Morita S."/>
            <person name="Nakajima M."/>
            <person name="Masumura T."/>
            <person name="Tanaka K."/>
        </authorList>
    </citation>
    <scope>NUCLEOTIDE SEQUENCE [GENOMIC DNA / MRNA]</scope>
    <source>
        <strain>cv. Nipponbare</strain>
    </source>
</reference>
<reference key="2">
    <citation type="journal article" date="2005" name="Nature">
        <title>The map-based sequence of the rice genome.</title>
        <authorList>
            <consortium name="International rice genome sequencing project (IRGSP)"/>
        </authorList>
    </citation>
    <scope>NUCLEOTIDE SEQUENCE [LARGE SCALE GENOMIC DNA]</scope>
    <source>
        <strain>cv. Nipponbare</strain>
    </source>
</reference>
<reference key="3">
    <citation type="journal article" date="2008" name="Nucleic Acids Res.">
        <title>The rice annotation project database (RAP-DB): 2008 update.</title>
        <authorList>
            <consortium name="The rice annotation project (RAP)"/>
        </authorList>
    </citation>
    <scope>GENOME REANNOTATION</scope>
    <source>
        <strain>cv. Nipponbare</strain>
    </source>
</reference>
<reference key="4">
    <citation type="journal article" date="2013" name="Rice">
        <title>Improvement of the Oryza sativa Nipponbare reference genome using next generation sequence and optical map data.</title>
        <authorList>
            <person name="Kawahara Y."/>
            <person name="de la Bastide M."/>
            <person name="Hamilton J.P."/>
            <person name="Kanamori H."/>
            <person name="McCombie W.R."/>
            <person name="Ouyang S."/>
            <person name="Schwartz D.C."/>
            <person name="Tanaka T."/>
            <person name="Wu J."/>
            <person name="Zhou S."/>
            <person name="Childs K.L."/>
            <person name="Davidson R.M."/>
            <person name="Lin H."/>
            <person name="Quesada-Ocampo L."/>
            <person name="Vaillancourt B."/>
            <person name="Sakai H."/>
            <person name="Lee S.S."/>
            <person name="Kim J."/>
            <person name="Numa H."/>
            <person name="Itoh T."/>
            <person name="Buell C.R."/>
            <person name="Matsumoto T."/>
        </authorList>
    </citation>
    <scope>GENOME REANNOTATION</scope>
    <source>
        <strain>cv. Nipponbare</strain>
    </source>
</reference>
<reference key="5">
    <citation type="journal article" date="2005" name="PLoS Biol.">
        <title>The genomes of Oryza sativa: a history of duplications.</title>
        <authorList>
            <person name="Yu J."/>
            <person name="Wang J."/>
            <person name="Lin W."/>
            <person name="Li S."/>
            <person name="Li H."/>
            <person name="Zhou J."/>
            <person name="Ni P."/>
            <person name="Dong W."/>
            <person name="Hu S."/>
            <person name="Zeng C."/>
            <person name="Zhang J."/>
            <person name="Zhang Y."/>
            <person name="Li R."/>
            <person name="Xu Z."/>
            <person name="Li S."/>
            <person name="Li X."/>
            <person name="Zheng H."/>
            <person name="Cong L."/>
            <person name="Lin L."/>
            <person name="Yin J."/>
            <person name="Geng J."/>
            <person name="Li G."/>
            <person name="Shi J."/>
            <person name="Liu J."/>
            <person name="Lv H."/>
            <person name="Li J."/>
            <person name="Wang J."/>
            <person name="Deng Y."/>
            <person name="Ran L."/>
            <person name="Shi X."/>
            <person name="Wang X."/>
            <person name="Wu Q."/>
            <person name="Li C."/>
            <person name="Ren X."/>
            <person name="Wang J."/>
            <person name="Wang X."/>
            <person name="Li D."/>
            <person name="Liu D."/>
            <person name="Zhang X."/>
            <person name="Ji Z."/>
            <person name="Zhao W."/>
            <person name="Sun Y."/>
            <person name="Zhang Z."/>
            <person name="Bao J."/>
            <person name="Han Y."/>
            <person name="Dong L."/>
            <person name="Ji J."/>
            <person name="Chen P."/>
            <person name="Wu S."/>
            <person name="Liu J."/>
            <person name="Xiao Y."/>
            <person name="Bu D."/>
            <person name="Tan J."/>
            <person name="Yang L."/>
            <person name="Ye C."/>
            <person name="Zhang J."/>
            <person name="Xu J."/>
            <person name="Zhou Y."/>
            <person name="Yu Y."/>
            <person name="Zhang B."/>
            <person name="Zhuang S."/>
            <person name="Wei H."/>
            <person name="Liu B."/>
            <person name="Lei M."/>
            <person name="Yu H."/>
            <person name="Li Y."/>
            <person name="Xu H."/>
            <person name="Wei S."/>
            <person name="He X."/>
            <person name="Fang L."/>
            <person name="Zhang Z."/>
            <person name="Zhang Y."/>
            <person name="Huang X."/>
            <person name="Su Z."/>
            <person name="Tong W."/>
            <person name="Li J."/>
            <person name="Tong Z."/>
            <person name="Li S."/>
            <person name="Ye J."/>
            <person name="Wang L."/>
            <person name="Fang L."/>
            <person name="Lei T."/>
            <person name="Chen C.-S."/>
            <person name="Chen H.-C."/>
            <person name="Xu Z."/>
            <person name="Li H."/>
            <person name="Huang H."/>
            <person name="Zhang F."/>
            <person name="Xu H."/>
            <person name="Li N."/>
            <person name="Zhao C."/>
            <person name="Li S."/>
            <person name="Dong L."/>
            <person name="Huang Y."/>
            <person name="Li L."/>
            <person name="Xi Y."/>
            <person name="Qi Q."/>
            <person name="Li W."/>
            <person name="Zhang B."/>
            <person name="Hu W."/>
            <person name="Zhang Y."/>
            <person name="Tian X."/>
            <person name="Jiao Y."/>
            <person name="Liang X."/>
            <person name="Jin J."/>
            <person name="Gao L."/>
            <person name="Zheng W."/>
            <person name="Hao B."/>
            <person name="Liu S.-M."/>
            <person name="Wang W."/>
            <person name="Yuan L."/>
            <person name="Cao M."/>
            <person name="McDermott J."/>
            <person name="Samudrala R."/>
            <person name="Wang J."/>
            <person name="Wong G.K.-S."/>
            <person name="Yang H."/>
        </authorList>
    </citation>
    <scope>NUCLEOTIDE SEQUENCE [LARGE SCALE GENOMIC DNA]</scope>
    <source>
        <strain>cv. Nipponbare</strain>
    </source>
</reference>
<reference key="6">
    <citation type="journal article" date="2002" name="Genetics">
        <title>Molecular evidence on the origin and evolution of glutinous rice.</title>
        <authorList>
            <person name="Olsen K.M."/>
            <person name="Purugganan M.D."/>
        </authorList>
    </citation>
    <scope>NUCLEOTIDE SEQUENCE [GENOMIC DNA] OF 355-413</scope>
</reference>
<keyword id="KW-0963">Cytoplasm</keyword>
<keyword id="KW-1015">Disulfide bond</keyword>
<keyword id="KW-0274">FAD</keyword>
<keyword id="KW-0285">Flavoprotein</keyword>
<keyword id="KW-0521">NADP</keyword>
<keyword id="KW-0560">Oxidoreductase</keyword>
<keyword id="KW-0676">Redox-active center</keyword>
<keyword id="KW-1185">Reference proteome</keyword>
<dbReference type="EC" id="1.8.1.7"/>
<dbReference type="EMBL" id="D78136">
    <property type="protein sequence ID" value="BAA11214.1"/>
    <property type="molecule type" value="mRNA"/>
</dbReference>
<dbReference type="EMBL" id="D85751">
    <property type="protein sequence ID" value="BAA36283.1"/>
    <property type="molecule type" value="mRNA"/>
</dbReference>
<dbReference type="EMBL" id="AB009592">
    <property type="protein sequence ID" value="BAA37092.1"/>
    <property type="molecule type" value="Genomic_DNA"/>
</dbReference>
<dbReference type="EMBL" id="AP004120">
    <property type="protein sequence ID" value="BAD21653.1"/>
    <property type="molecule type" value="Genomic_DNA"/>
</dbReference>
<dbReference type="EMBL" id="AP005691">
    <property type="protein sequence ID" value="BAD22392.1"/>
    <property type="molecule type" value="Genomic_DNA"/>
</dbReference>
<dbReference type="EMBL" id="AP008208">
    <property type="protein sequence ID" value="BAF10399.1"/>
    <property type="molecule type" value="Genomic_DNA"/>
</dbReference>
<dbReference type="EMBL" id="AP014958">
    <property type="protein sequence ID" value="BAS81540.1"/>
    <property type="molecule type" value="Genomic_DNA"/>
</dbReference>
<dbReference type="EMBL" id="CM000139">
    <property type="protein sequence ID" value="EAZ25050.1"/>
    <property type="molecule type" value="Genomic_DNA"/>
</dbReference>
<dbReference type="EMBL" id="AY136760">
    <property type="protein sequence ID" value="AAN15933.1"/>
    <property type="molecule type" value="Genomic_DNA"/>
</dbReference>
<dbReference type="EMBL" id="AY136761">
    <property type="protein sequence ID" value="AAN15934.1"/>
    <property type="molecule type" value="Genomic_DNA"/>
</dbReference>
<dbReference type="EMBL" id="AY136762">
    <property type="protein sequence ID" value="AAN15935.1"/>
    <property type="molecule type" value="Genomic_DNA"/>
</dbReference>
<dbReference type="EMBL" id="AY136763">
    <property type="protein sequence ID" value="AAN15936.1"/>
    <property type="molecule type" value="Genomic_DNA"/>
</dbReference>
<dbReference type="EMBL" id="AY136764">
    <property type="protein sequence ID" value="AAN15937.1"/>
    <property type="molecule type" value="Genomic_DNA"/>
</dbReference>
<dbReference type="EMBL" id="AY136765">
    <property type="protein sequence ID" value="AAN15938.1"/>
    <property type="molecule type" value="Genomic_DNA"/>
</dbReference>
<dbReference type="EMBL" id="AY136766">
    <property type="protein sequence ID" value="AAN15939.1"/>
    <property type="molecule type" value="Genomic_DNA"/>
</dbReference>
<dbReference type="PIR" id="T03766">
    <property type="entry name" value="T03766"/>
</dbReference>
<dbReference type="RefSeq" id="XP_015626808.1">
    <property type="nucleotide sequence ID" value="XM_015771322.1"/>
</dbReference>
<dbReference type="RefSeq" id="XP_015626809.1">
    <property type="nucleotide sequence ID" value="XM_015771323.1"/>
</dbReference>
<dbReference type="SMR" id="P48642"/>
<dbReference type="FunCoup" id="P48642">
    <property type="interactions" value="2528"/>
</dbReference>
<dbReference type="STRING" id="39947.P48642"/>
<dbReference type="PaxDb" id="39947-P48642"/>
<dbReference type="EnsemblPlants" id="Os02t0813500-01">
    <property type="protein sequence ID" value="Os02t0813500-01"/>
    <property type="gene ID" value="Os02g0813500"/>
</dbReference>
<dbReference type="Gramene" id="Os02t0813500-01">
    <property type="protein sequence ID" value="Os02t0813500-01"/>
    <property type="gene ID" value="Os02g0813500"/>
</dbReference>
<dbReference type="KEGG" id="dosa:Os02g0813500"/>
<dbReference type="eggNOG" id="KOG0405">
    <property type="taxonomic scope" value="Eukaryota"/>
</dbReference>
<dbReference type="HOGENOM" id="CLU_016755_2_1_1"/>
<dbReference type="InParanoid" id="P48642"/>
<dbReference type="OMA" id="NYHKLAD"/>
<dbReference type="OrthoDB" id="5956163at2759"/>
<dbReference type="BRENDA" id="1.8.1.7">
    <property type="organism ID" value="4460"/>
</dbReference>
<dbReference type="PlantReactome" id="R-OSA-1119298">
    <property type="pathway name" value="Glutathione redox reactions II"/>
</dbReference>
<dbReference type="PlantReactome" id="R-OSA-1119437">
    <property type="pathway name" value="Glutathione redox reactions I"/>
</dbReference>
<dbReference type="Proteomes" id="UP000000763">
    <property type="component" value="Chromosome 2"/>
</dbReference>
<dbReference type="Proteomes" id="UP000007752">
    <property type="component" value="Chromosome 2"/>
</dbReference>
<dbReference type="Proteomes" id="UP000059680">
    <property type="component" value="Chromosome 2"/>
</dbReference>
<dbReference type="ExpressionAtlas" id="P48642">
    <property type="expression patterns" value="baseline and differential"/>
</dbReference>
<dbReference type="GO" id="GO:0005737">
    <property type="term" value="C:cytoplasm"/>
    <property type="evidence" value="ECO:0000318"/>
    <property type="project" value="GO_Central"/>
</dbReference>
<dbReference type="GO" id="GO:0050660">
    <property type="term" value="F:flavin adenine dinucleotide binding"/>
    <property type="evidence" value="ECO:0007669"/>
    <property type="project" value="InterPro"/>
</dbReference>
<dbReference type="GO" id="GO:0004362">
    <property type="term" value="F:glutathione-disulfide reductase (NADPH) activity"/>
    <property type="evidence" value="ECO:0007669"/>
    <property type="project" value="UniProtKB-EC"/>
</dbReference>
<dbReference type="GO" id="GO:0050661">
    <property type="term" value="F:NADP binding"/>
    <property type="evidence" value="ECO:0007669"/>
    <property type="project" value="InterPro"/>
</dbReference>
<dbReference type="GO" id="GO:0004791">
    <property type="term" value="F:thioredoxin-disulfide reductase (NADPH) activity"/>
    <property type="evidence" value="ECO:0000318"/>
    <property type="project" value="GO_Central"/>
</dbReference>
<dbReference type="GO" id="GO:0045454">
    <property type="term" value="P:cell redox homeostasis"/>
    <property type="evidence" value="ECO:0000318"/>
    <property type="project" value="GO_Central"/>
</dbReference>
<dbReference type="GO" id="GO:0006749">
    <property type="term" value="P:glutathione metabolic process"/>
    <property type="evidence" value="ECO:0007669"/>
    <property type="project" value="InterPro"/>
</dbReference>
<dbReference type="FunFam" id="3.30.390.30:FF:000008">
    <property type="entry name" value="Glutathione reductase"/>
    <property type="match status" value="1"/>
</dbReference>
<dbReference type="FunFam" id="3.50.50.60:FF:000051">
    <property type="entry name" value="Glutathione reductase"/>
    <property type="match status" value="1"/>
</dbReference>
<dbReference type="Gene3D" id="3.30.390.30">
    <property type="match status" value="1"/>
</dbReference>
<dbReference type="Gene3D" id="3.50.50.60">
    <property type="entry name" value="FAD/NAD(P)-binding domain"/>
    <property type="match status" value="2"/>
</dbReference>
<dbReference type="InterPro" id="IPR036188">
    <property type="entry name" value="FAD/NAD-bd_sf"/>
</dbReference>
<dbReference type="InterPro" id="IPR023753">
    <property type="entry name" value="FAD/NAD-binding_dom"/>
</dbReference>
<dbReference type="InterPro" id="IPR016156">
    <property type="entry name" value="FAD/NAD-linked_Rdtase_dimer_sf"/>
</dbReference>
<dbReference type="InterPro" id="IPR006324">
    <property type="entry name" value="GSHR"/>
</dbReference>
<dbReference type="InterPro" id="IPR046952">
    <property type="entry name" value="GSHR/TRXR-like"/>
</dbReference>
<dbReference type="InterPro" id="IPR001100">
    <property type="entry name" value="Pyr_nuc-diS_OxRdtase"/>
</dbReference>
<dbReference type="InterPro" id="IPR004099">
    <property type="entry name" value="Pyr_nucl-diS_OxRdtase_dimer"/>
</dbReference>
<dbReference type="InterPro" id="IPR012999">
    <property type="entry name" value="Pyr_OxRdtase_I_AS"/>
</dbReference>
<dbReference type="NCBIfam" id="TIGR01424">
    <property type="entry name" value="gluta_reduc_2"/>
    <property type="match status" value="1"/>
</dbReference>
<dbReference type="NCBIfam" id="NF004776">
    <property type="entry name" value="PRK06116.1"/>
    <property type="match status" value="1"/>
</dbReference>
<dbReference type="PANTHER" id="PTHR42737">
    <property type="entry name" value="GLUTATHIONE REDUCTASE"/>
    <property type="match status" value="1"/>
</dbReference>
<dbReference type="PANTHER" id="PTHR42737:SF2">
    <property type="entry name" value="GLUTATHIONE REDUCTASE"/>
    <property type="match status" value="1"/>
</dbReference>
<dbReference type="Pfam" id="PF07992">
    <property type="entry name" value="Pyr_redox_2"/>
    <property type="match status" value="1"/>
</dbReference>
<dbReference type="Pfam" id="PF02852">
    <property type="entry name" value="Pyr_redox_dim"/>
    <property type="match status" value="1"/>
</dbReference>
<dbReference type="PIRSF" id="PIRSF000350">
    <property type="entry name" value="Mercury_reductase_MerA"/>
    <property type="match status" value="1"/>
</dbReference>
<dbReference type="PRINTS" id="PR00368">
    <property type="entry name" value="FADPNR"/>
</dbReference>
<dbReference type="PRINTS" id="PR00411">
    <property type="entry name" value="PNDRDTASEI"/>
</dbReference>
<dbReference type="SUPFAM" id="SSF51905">
    <property type="entry name" value="FAD/NAD(P)-binding domain"/>
    <property type="match status" value="1"/>
</dbReference>
<dbReference type="SUPFAM" id="SSF55424">
    <property type="entry name" value="FAD/NAD-linked reductases, dimerisation (C-terminal) domain"/>
    <property type="match status" value="1"/>
</dbReference>
<dbReference type="PROSITE" id="PS00076">
    <property type="entry name" value="PYRIDINE_REDOX_1"/>
    <property type="match status" value="1"/>
</dbReference>
<proteinExistence type="evidence at transcript level"/>
<name>GSHRC_ORYSJ</name>
<protein>
    <recommendedName>
        <fullName>Glutathione reductase, cytosolic</fullName>
        <shortName>GR</shortName>
        <shortName>GRase</shortName>
        <ecNumber>1.8.1.7</ecNumber>
    </recommendedName>
</protein>
<accession>P48642</accession>
<accession>A0A0P0VR51</accession>
<accession>Q0DWI9</accession>
<accession>Q6K3E8</accession>
<accession>Q8GRV3</accession>
<accession>Q9ZNS8</accession>
<gene>
    <name type="primary">GRC2</name>
    <name type="synonym">RGRC2</name>
    <name evidence="4" type="ordered locus">Os02g0813500</name>
    <name evidence="3" type="ordered locus">LOC_Os02g56850</name>
    <name type="ORF">OJ1293_E04.4-1</name>
    <name evidence="5" type="ORF">OsJ_08842</name>
    <name type="ORF">OSJNBa0053L11.26-1</name>
</gene>
<organism>
    <name type="scientific">Oryza sativa subsp. japonica</name>
    <name type="common">Rice</name>
    <dbReference type="NCBI Taxonomy" id="39947"/>
    <lineage>
        <taxon>Eukaryota</taxon>
        <taxon>Viridiplantae</taxon>
        <taxon>Streptophyta</taxon>
        <taxon>Embryophyta</taxon>
        <taxon>Tracheophyta</taxon>
        <taxon>Spermatophyta</taxon>
        <taxon>Magnoliopsida</taxon>
        <taxon>Liliopsida</taxon>
        <taxon>Poales</taxon>
        <taxon>Poaceae</taxon>
        <taxon>BOP clade</taxon>
        <taxon>Oryzoideae</taxon>
        <taxon>Oryzeae</taxon>
        <taxon>Oryzinae</taxon>
        <taxon>Oryza</taxon>
        <taxon>Oryza sativa</taxon>
    </lineage>
</organism>
<feature type="chain" id="PRO_0000067963" description="Glutathione reductase, cytosolic">
    <location>
        <begin position="1"/>
        <end position="496"/>
    </location>
</feature>
<feature type="active site" description="Proton acceptor" evidence="1">
    <location>
        <position position="469"/>
    </location>
</feature>
<feature type="binding site" evidence="2">
    <location>
        <position position="32"/>
    </location>
    <ligand>
        <name>FAD</name>
        <dbReference type="ChEBI" id="CHEBI:57692"/>
    </ligand>
</feature>
<feature type="binding site" evidence="1">
    <location>
        <position position="32"/>
    </location>
    <ligand>
        <name>glutathione</name>
        <dbReference type="ChEBI" id="CHEBI:57925"/>
    </ligand>
</feature>
<feature type="binding site" evidence="2">
    <location>
        <position position="33"/>
    </location>
    <ligand>
        <name>FAD</name>
        <dbReference type="ChEBI" id="CHEBI:57692"/>
    </ligand>
</feature>
<feature type="binding site" evidence="2">
    <location>
        <position position="52"/>
    </location>
    <ligand>
        <name>FAD</name>
        <dbReference type="ChEBI" id="CHEBI:57692"/>
    </ligand>
</feature>
<feature type="binding site" evidence="2">
    <location>
        <position position="69"/>
    </location>
    <ligand>
        <name>FAD</name>
        <dbReference type="ChEBI" id="CHEBI:57692"/>
    </ligand>
</feature>
<feature type="binding site" evidence="2">
    <location>
        <position position="70"/>
    </location>
    <ligand>
        <name>FAD</name>
        <dbReference type="ChEBI" id="CHEBI:57692"/>
    </ligand>
</feature>
<feature type="binding site" evidence="2">
    <location>
        <position position="78"/>
    </location>
    <ligand>
        <name>FAD</name>
        <dbReference type="ChEBI" id="CHEBI:57692"/>
    </ligand>
</feature>
<feature type="binding site" evidence="1">
    <location>
        <position position="127"/>
    </location>
    <ligand>
        <name>glutathione</name>
        <dbReference type="ChEBI" id="CHEBI:57925"/>
    </ligand>
</feature>
<feature type="binding site" evidence="2">
    <location>
        <position position="143"/>
    </location>
    <ligand>
        <name>FAD</name>
        <dbReference type="ChEBI" id="CHEBI:57692"/>
    </ligand>
</feature>
<feature type="binding site" evidence="2">
    <location>
        <position position="208"/>
    </location>
    <ligand>
        <name>NADP(+)</name>
        <dbReference type="ChEBI" id="CHEBI:58349"/>
    </ligand>
</feature>
<feature type="binding site" evidence="2">
    <location>
        <position position="211"/>
    </location>
    <ligand>
        <name>NADP(+)</name>
        <dbReference type="ChEBI" id="CHEBI:58349"/>
    </ligand>
</feature>
<feature type="binding site" evidence="2">
    <location>
        <position position="214"/>
    </location>
    <ligand>
        <name>NADP(+)</name>
        <dbReference type="ChEBI" id="CHEBI:58349"/>
    </ligand>
</feature>
<feature type="binding site" evidence="2">
    <location>
        <position position="231"/>
    </location>
    <ligand>
        <name>NADP(+)</name>
        <dbReference type="ChEBI" id="CHEBI:58349"/>
    </ligand>
</feature>
<feature type="binding site" evidence="2">
    <location>
        <position position="237"/>
    </location>
    <ligand>
        <name>NADP(+)</name>
        <dbReference type="ChEBI" id="CHEBI:58349"/>
    </ligand>
</feature>
<feature type="binding site" evidence="2">
    <location>
        <position position="294"/>
    </location>
    <ligand>
        <name>NADP(+)</name>
        <dbReference type="ChEBI" id="CHEBI:58349"/>
    </ligand>
</feature>
<feature type="binding site" evidence="2">
    <location>
        <position position="335"/>
    </location>
    <ligand>
        <name>FAD</name>
        <dbReference type="ChEBI" id="CHEBI:57692"/>
    </ligand>
</feature>
<feature type="binding site" evidence="2">
    <location>
        <position position="343"/>
    </location>
    <ligand>
        <name>FAD</name>
        <dbReference type="ChEBI" id="CHEBI:57692"/>
    </ligand>
</feature>
<feature type="binding site" evidence="2">
    <location>
        <position position="373"/>
    </location>
    <ligand>
        <name>NADP(+)</name>
        <dbReference type="ChEBI" id="CHEBI:58349"/>
    </ligand>
</feature>
<feature type="binding site" evidence="2">
    <location>
        <position position="469"/>
    </location>
    <ligand>
        <name>FAD</name>
        <dbReference type="ChEBI" id="CHEBI:57692"/>
    </ligand>
</feature>
<feature type="disulfide bond" description="Redox-active" evidence="2">
    <location>
        <begin position="70"/>
        <end position="75"/>
    </location>
</feature>
<feature type="sequence conflict" description="In Ref. 1; BAA11214." evidence="3" ref="1">
    <original>G</original>
    <variation>V</variation>
    <location>
        <position position="31"/>
    </location>
</feature>
<feature type="sequence conflict" description="In Ref. 1; BAA11214." evidence="3" ref="1">
    <original>V</original>
    <variation>F</variation>
    <location>
        <position position="48"/>
    </location>
</feature>
<feature type="sequence conflict" description="In Ref. 1; BAA11214." evidence="3" ref="1">
    <original>F</original>
    <variation>L</variation>
    <location>
        <position position="97"/>
    </location>
</feature>
<sequence>MARKMLKDEEVEVAVTDGGSYDYDLFVIGAGSGGVRGSRTSASFGAKVAICELPFHPISSDWQGGHGGTCVIRGCVPKKILVYGSSFRGEFEDAKNFGWEINGDINFNWKRLLENKTQEIVRLNGVYQRILGNSGVTMIEGAGSLVDAHTVEVTKPDGSKQRYTAKHILIATGSRAQRVNIPGKELAITSDEALSLEELPKRAVILGGGYIAVEFASIWKGMGAHVDLFYRKELPLRGFDDEMRTVVASNLEGRGIRLHPGTNLSELSKTADGIKVVTDKGEEIIADVVLFATGRTPNSQRLNLEAAGVEVDNIGAIKVDDYSRTSVPNIWAVGDVTNRINLTPVALMEATCFSKTVFGGQPTKPDYRDVPCAVFSIPPLSVVGLSEQQALEEAKSDVLVYTSSFNPMKNSISKRQEKTVMKLVVDSETDKVLGASMCGPDAPEIIQGMAVALKCGATKATFDSTVGIHPSAAEEFVTMRTLTRRVSPSSKPKTNL</sequence>
<comment type="function">
    <text evidence="2">Catalyzes the reduction of glutathione disulfide (GSSG) to reduced glutathione (GSH). Constitutes the major mechanism to maintain a high GSH:GSSG ratio in the cytosol.</text>
</comment>
<comment type="catalytic activity">
    <reaction evidence="2">
        <text>2 glutathione + NADP(+) = glutathione disulfide + NADPH + H(+)</text>
        <dbReference type="Rhea" id="RHEA:11740"/>
        <dbReference type="ChEBI" id="CHEBI:15378"/>
        <dbReference type="ChEBI" id="CHEBI:57783"/>
        <dbReference type="ChEBI" id="CHEBI:57925"/>
        <dbReference type="ChEBI" id="CHEBI:58297"/>
        <dbReference type="ChEBI" id="CHEBI:58349"/>
        <dbReference type="EC" id="1.8.1.7"/>
    </reaction>
</comment>
<comment type="cofactor">
    <cofactor evidence="2">
        <name>FAD</name>
        <dbReference type="ChEBI" id="CHEBI:57692"/>
    </cofactor>
    <text evidence="2">Binds 1 FAD per subunit.</text>
</comment>
<comment type="subunit">
    <text evidence="2">Homodimer.</text>
</comment>
<comment type="subcellular location">
    <subcellularLocation>
        <location>Cytoplasm</location>
    </subcellularLocation>
</comment>
<comment type="miscellaneous">
    <text evidence="2">The active site is a redox-active disulfide bond.</text>
</comment>
<comment type="similarity">
    <text evidence="3">Belongs to the class-I pyridine nucleotide-disulfide oxidoreductase family.</text>
</comment>